<feature type="signal peptide" evidence="5">
    <location>
        <begin position="1"/>
        <end position="30"/>
    </location>
</feature>
<feature type="chain" id="PRO_0000412636" description="Lipoprotein p35">
    <location>
        <begin position="31"/>
        <end position="362"/>
    </location>
</feature>
<feature type="region of interest" description="Disordered" evidence="2">
    <location>
        <begin position="33"/>
        <end position="53"/>
    </location>
</feature>
<feature type="lipid moiety-binding region" description="N-palmitoyl cysteine" evidence="5">
    <location>
        <position position="31"/>
    </location>
</feature>
<feature type="lipid moiety-binding region" description="S-diacylglycerol cysteine" evidence="5">
    <location>
        <position position="31"/>
    </location>
</feature>
<name>P35_MALPE</name>
<organism>
    <name type="scientific">Malacoplasma penetrans</name>
    <name type="common">Mycoplasma penetrans</name>
    <dbReference type="NCBI Taxonomy" id="28227"/>
    <lineage>
        <taxon>Bacteria</taxon>
        <taxon>Bacillati</taxon>
        <taxon>Mycoplasmatota</taxon>
        <taxon>Mycoplasmoidales</taxon>
        <taxon>Mycoplasmoidaceae</taxon>
        <taxon>Malacoplasma</taxon>
    </lineage>
</organism>
<keyword id="KW-1003">Cell membrane</keyword>
<keyword id="KW-0903">Direct protein sequencing</keyword>
<keyword id="KW-0449">Lipoprotein</keyword>
<keyword id="KW-0472">Membrane</keyword>
<keyword id="KW-0564">Palmitate</keyword>
<keyword id="KW-0732">Signal</keyword>
<sequence length="362" mass="38384">MKIKKIKLLKALALTGAFGIVATVPVIVSSCSSTSENNGNGNGNGGTDGNTQQTEVTPAIKSEVSLTGALSKIYDTKTGTDRETTSQLIVKDIKANPENYFTNGEALKDVIASATVTVDGGFTESTFTGEAYSVWSAKADVKKGTYSQASKQLDIKSINDLQTVLGDSAAIKGICDLIPNLKLNNGTDYKVTNNGLSLSEDLLHINVTAKDGQTDVSMDLAIPVSDLNLKIDGLKISVSGTGIKTSELTTNYKFNIGIDNTVKTLTPAAVTLAEADRTNAEKVLEKLGYATVSGSTYTLDQDKLADALGLYNCKFEAVKSEKDSTNNNKYTVTLKATPNDGYFWEDGTNGAKEEISFVATFS</sequence>
<dbReference type="EMBL" id="L38250">
    <property type="protein sequence ID" value="AAC16392.1"/>
    <property type="molecule type" value="Genomic_DNA"/>
</dbReference>
<dbReference type="GO" id="GO:0005886">
    <property type="term" value="C:plasma membrane"/>
    <property type="evidence" value="ECO:0007669"/>
    <property type="project" value="UniProtKB-SubCell"/>
</dbReference>
<dbReference type="InterPro" id="IPR011653">
    <property type="entry name" value="Lipoprotein_p35"/>
</dbReference>
<dbReference type="Pfam" id="PF07668">
    <property type="entry name" value="MpPF1"/>
    <property type="match status" value="1"/>
</dbReference>
<dbReference type="PROSITE" id="PS51257">
    <property type="entry name" value="PROKAR_LIPOPROTEIN"/>
    <property type="match status" value="1"/>
</dbReference>
<proteinExistence type="evidence at protein level"/>
<accession>P0DJ01</accession>
<accession>Q50367</accession>
<evidence type="ECO:0000255" key="1">
    <source>
        <dbReference type="PROSITE-ProRule" id="PRU00303"/>
    </source>
</evidence>
<evidence type="ECO:0000256" key="2">
    <source>
        <dbReference type="SAM" id="MobiDB-lite"/>
    </source>
</evidence>
<evidence type="ECO:0000269" key="3">
    <source>
    </source>
</evidence>
<evidence type="ECO:0000269" key="4">
    <source>
    </source>
</evidence>
<evidence type="ECO:0000305" key="5"/>
<reference key="1">
    <citation type="journal article" date="1995" name="FEMS Microbiol. Lett.">
        <title>Characterization of a major Mycoplasma penetrans lipoprotein and of its gene.</title>
        <authorList>
            <person name="Ferris S."/>
            <person name="Watson H.L."/>
            <person name="Neyrolles O."/>
            <person name="Montagnier L."/>
            <person name="Blanchard A."/>
        </authorList>
    </citation>
    <scope>NUCLEOTIDE SEQUENCE [GENOMIC DNA]</scope>
    <scope>FUNCTION</scope>
    <scope>BLOCKAGE OF N-TERMINUS</scope>
    <scope>PROTEIN SEQUENCE OF 211-225</scope>
    <source>
        <strain>ATCC 55252 / DSM 22633 / GTU-54-6A1</strain>
    </source>
</reference>
<reference key="2">
    <citation type="journal article" date="1999" name="Microbiology">
        <title>Antigenic characterization and cytolocalization of P35, the major Mycoplasma penetrans antigen.</title>
        <authorList>
            <person name="Neyrolles O."/>
            <person name="Eliane J.-P."/>
            <person name="Ferris S."/>
            <person name="da Cunha R.A.F."/>
            <person name="Prevost M.-C."/>
            <person name="Bahraoui E."/>
            <person name="Blanchard A."/>
        </authorList>
    </citation>
    <scope>CHARACTERIZATION</scope>
    <scope>FUNCTION</scope>
    <scope>SUBCELLULAR LOCATION</scope>
    <source>
        <strain>ATCC 55252 / DSM 22633 / GTU-54-6A1</strain>
    </source>
</reference>
<protein>
    <recommendedName>
        <fullName>Lipoprotein p35</fullName>
    </recommendedName>
</protein>
<comment type="function">
    <text evidence="3 4">Major M.penetrans antigen.</text>
</comment>
<comment type="subcellular location">
    <subcellularLocation>
        <location evidence="1 3">Cell membrane</location>
        <topology evidence="1 3">Lipid-anchor</topology>
        <orientation evidence="3">Extracellular side</orientation>
    </subcellularLocation>
    <text>Distributed all over the plasma membrane.</text>
</comment>
<comment type="PTM">
    <text evidence="5">The N-terminus is blocked.</text>
</comment>
<comment type="miscellaneous">
    <text>The dominant B-epitopes are found at the N- and C-terminal regions.</text>
</comment>
<comment type="similarity">
    <text evidence="5">Belongs to the p35 lipoprotein family.</text>
</comment>